<reference key="1">
    <citation type="submission" date="2008-04" db="EMBL/GenBank/DDBJ databases">
        <title>Complete sequence of chromosome 1 of Burkholderia ambifaria MC40-6.</title>
        <authorList>
            <person name="Copeland A."/>
            <person name="Lucas S."/>
            <person name="Lapidus A."/>
            <person name="Glavina del Rio T."/>
            <person name="Dalin E."/>
            <person name="Tice H."/>
            <person name="Pitluck S."/>
            <person name="Chain P."/>
            <person name="Malfatti S."/>
            <person name="Shin M."/>
            <person name="Vergez L."/>
            <person name="Lang D."/>
            <person name="Schmutz J."/>
            <person name="Larimer F."/>
            <person name="Land M."/>
            <person name="Hauser L."/>
            <person name="Kyrpides N."/>
            <person name="Lykidis A."/>
            <person name="Ramette A."/>
            <person name="Konstantinidis K."/>
            <person name="Tiedje J."/>
            <person name="Richardson P."/>
        </authorList>
    </citation>
    <scope>NUCLEOTIDE SEQUENCE [LARGE SCALE GENOMIC DNA]</scope>
    <source>
        <strain>MC40-6</strain>
    </source>
</reference>
<keyword id="KW-0456">Lyase</keyword>
<evidence type="ECO:0000255" key="1">
    <source>
        <dbReference type="HAMAP-Rule" id="MF_00434"/>
    </source>
</evidence>
<feature type="chain" id="PRO_1000192909" description="Putative pterin-4-alpha-carbinolamine dehydratase">
    <location>
        <begin position="1"/>
        <end position="102"/>
    </location>
</feature>
<gene>
    <name type="ordered locus">BamMC406_0076</name>
</gene>
<sequence length="102" mass="11749">MIHKLTSEERKTRLEGLPHWTAVPGRDAIQRSLRFADFNEAFGFMTRIAIKAQEMNHHPEWFNVYNRVDITLSTHDAHGLTERDIALAQFIDHVCAHTEPAA</sequence>
<name>PHS_BURA4</name>
<protein>
    <recommendedName>
        <fullName evidence="1">Putative pterin-4-alpha-carbinolamine dehydratase</fullName>
        <shortName evidence="1">PHS</shortName>
        <ecNumber evidence="1">4.2.1.96</ecNumber>
    </recommendedName>
    <alternativeName>
        <fullName evidence="1">4-alpha-hydroxy-tetrahydropterin dehydratase</fullName>
    </alternativeName>
    <alternativeName>
        <fullName evidence="1">Pterin carbinolamine dehydratase</fullName>
        <shortName evidence="1">PCD</shortName>
    </alternativeName>
</protein>
<proteinExistence type="inferred from homology"/>
<dbReference type="EC" id="4.2.1.96" evidence="1"/>
<dbReference type="EMBL" id="CP001025">
    <property type="protein sequence ID" value="ACB62578.1"/>
    <property type="molecule type" value="Genomic_DNA"/>
</dbReference>
<dbReference type="SMR" id="B1YQ64"/>
<dbReference type="KEGG" id="bac:BamMC406_0076"/>
<dbReference type="HOGENOM" id="CLU_081974_3_2_4"/>
<dbReference type="OrthoDB" id="9794987at2"/>
<dbReference type="Proteomes" id="UP000001680">
    <property type="component" value="Chromosome 1"/>
</dbReference>
<dbReference type="GO" id="GO:0008124">
    <property type="term" value="F:4-alpha-hydroxytetrahydrobiopterin dehydratase activity"/>
    <property type="evidence" value="ECO:0007669"/>
    <property type="project" value="UniProtKB-UniRule"/>
</dbReference>
<dbReference type="GO" id="GO:0006729">
    <property type="term" value="P:tetrahydrobiopterin biosynthetic process"/>
    <property type="evidence" value="ECO:0007669"/>
    <property type="project" value="InterPro"/>
</dbReference>
<dbReference type="CDD" id="cd00914">
    <property type="entry name" value="PCD_DCoH_subfamily_b"/>
    <property type="match status" value="1"/>
</dbReference>
<dbReference type="Gene3D" id="3.30.1360.20">
    <property type="entry name" value="Transcriptional coactivator/pterin dehydratase"/>
    <property type="match status" value="1"/>
</dbReference>
<dbReference type="HAMAP" id="MF_00434">
    <property type="entry name" value="Pterin_4_alpha"/>
    <property type="match status" value="1"/>
</dbReference>
<dbReference type="InterPro" id="IPR036428">
    <property type="entry name" value="PCD_sf"/>
</dbReference>
<dbReference type="InterPro" id="IPR001533">
    <property type="entry name" value="Pterin_deHydtase"/>
</dbReference>
<dbReference type="NCBIfam" id="NF002017">
    <property type="entry name" value="PRK00823.1-2"/>
    <property type="match status" value="1"/>
</dbReference>
<dbReference type="NCBIfam" id="NF002018">
    <property type="entry name" value="PRK00823.1-3"/>
    <property type="match status" value="1"/>
</dbReference>
<dbReference type="NCBIfam" id="NF002020">
    <property type="entry name" value="PRK00823.1-5"/>
    <property type="match status" value="1"/>
</dbReference>
<dbReference type="PANTHER" id="PTHR12599">
    <property type="entry name" value="PTERIN-4-ALPHA-CARBINOLAMINE DEHYDRATASE"/>
    <property type="match status" value="1"/>
</dbReference>
<dbReference type="PANTHER" id="PTHR12599:SF0">
    <property type="entry name" value="PTERIN-4-ALPHA-CARBINOLAMINE DEHYDRATASE"/>
    <property type="match status" value="1"/>
</dbReference>
<dbReference type="Pfam" id="PF01329">
    <property type="entry name" value="Pterin_4a"/>
    <property type="match status" value="1"/>
</dbReference>
<dbReference type="SUPFAM" id="SSF55248">
    <property type="entry name" value="PCD-like"/>
    <property type="match status" value="1"/>
</dbReference>
<comment type="catalytic activity">
    <reaction evidence="1">
        <text>(4aS,6R)-4a-hydroxy-L-erythro-5,6,7,8-tetrahydrobiopterin = (6R)-L-erythro-6,7-dihydrobiopterin + H2O</text>
        <dbReference type="Rhea" id="RHEA:11920"/>
        <dbReference type="ChEBI" id="CHEBI:15377"/>
        <dbReference type="ChEBI" id="CHEBI:15642"/>
        <dbReference type="ChEBI" id="CHEBI:43120"/>
        <dbReference type="EC" id="4.2.1.96"/>
    </reaction>
</comment>
<comment type="similarity">
    <text evidence="1">Belongs to the pterin-4-alpha-carbinolamine dehydratase family.</text>
</comment>
<accession>B1YQ64</accession>
<organism>
    <name type="scientific">Burkholderia ambifaria (strain MC40-6)</name>
    <dbReference type="NCBI Taxonomy" id="398577"/>
    <lineage>
        <taxon>Bacteria</taxon>
        <taxon>Pseudomonadati</taxon>
        <taxon>Pseudomonadota</taxon>
        <taxon>Betaproteobacteria</taxon>
        <taxon>Burkholderiales</taxon>
        <taxon>Burkholderiaceae</taxon>
        <taxon>Burkholderia</taxon>
        <taxon>Burkholderia cepacia complex</taxon>
    </lineage>
</organism>